<name>NTPPB_SHESM</name>
<accession>Q0HHJ4</accession>
<keyword id="KW-0963">Cytoplasm</keyword>
<keyword id="KW-0378">Hydrolase</keyword>
<keyword id="KW-0546">Nucleotide metabolism</keyword>
<organism>
    <name type="scientific">Shewanella sp. (strain MR-4)</name>
    <dbReference type="NCBI Taxonomy" id="60480"/>
    <lineage>
        <taxon>Bacteria</taxon>
        <taxon>Pseudomonadati</taxon>
        <taxon>Pseudomonadota</taxon>
        <taxon>Gammaproteobacteria</taxon>
        <taxon>Alteromonadales</taxon>
        <taxon>Shewanellaceae</taxon>
        <taxon>Shewanella</taxon>
    </lineage>
</organism>
<feature type="chain" id="PRO_0000267427" description="7-methyl-GTP pyrophosphatase">
    <location>
        <begin position="1"/>
        <end position="195"/>
    </location>
</feature>
<feature type="active site" description="Proton acceptor" evidence="1">
    <location>
        <position position="70"/>
    </location>
</feature>
<feature type="site" description="Important for substrate specificity" evidence="1">
    <location>
        <position position="13"/>
    </location>
</feature>
<feature type="site" description="Important for substrate specificity" evidence="1">
    <location>
        <position position="71"/>
    </location>
</feature>
<feature type="site" description="Important for substrate specificity" evidence="1">
    <location>
        <position position="155"/>
    </location>
</feature>
<gene>
    <name type="ordered locus">Shewmr4_2402</name>
</gene>
<dbReference type="EC" id="3.6.1.-" evidence="1"/>
<dbReference type="EMBL" id="CP000446">
    <property type="protein sequence ID" value="ABI39473.1"/>
    <property type="status" value="ALT_INIT"/>
    <property type="molecule type" value="Genomic_DNA"/>
</dbReference>
<dbReference type="RefSeq" id="WP_041408796.1">
    <property type="nucleotide sequence ID" value="NC_008321.1"/>
</dbReference>
<dbReference type="SMR" id="Q0HHJ4"/>
<dbReference type="KEGG" id="she:Shewmr4_2402"/>
<dbReference type="HOGENOM" id="CLU_040416_1_0_6"/>
<dbReference type="GO" id="GO:0005737">
    <property type="term" value="C:cytoplasm"/>
    <property type="evidence" value="ECO:0007669"/>
    <property type="project" value="UniProtKB-SubCell"/>
</dbReference>
<dbReference type="GO" id="GO:0047429">
    <property type="term" value="F:nucleoside triphosphate diphosphatase activity"/>
    <property type="evidence" value="ECO:0007669"/>
    <property type="project" value="InterPro"/>
</dbReference>
<dbReference type="GO" id="GO:0009117">
    <property type="term" value="P:nucleotide metabolic process"/>
    <property type="evidence" value="ECO:0007669"/>
    <property type="project" value="UniProtKB-KW"/>
</dbReference>
<dbReference type="CDD" id="cd00555">
    <property type="entry name" value="Maf"/>
    <property type="match status" value="1"/>
</dbReference>
<dbReference type="FunFam" id="3.90.950.10:FF:000005">
    <property type="entry name" value="7-methyl-GTP pyrophosphatase"/>
    <property type="match status" value="1"/>
</dbReference>
<dbReference type="Gene3D" id="3.90.950.10">
    <property type="match status" value="1"/>
</dbReference>
<dbReference type="HAMAP" id="MF_00528">
    <property type="entry name" value="Maf"/>
    <property type="match status" value="1"/>
</dbReference>
<dbReference type="InterPro" id="IPR029001">
    <property type="entry name" value="ITPase-like_fam"/>
</dbReference>
<dbReference type="InterPro" id="IPR003697">
    <property type="entry name" value="Maf-like"/>
</dbReference>
<dbReference type="NCBIfam" id="TIGR00172">
    <property type="entry name" value="maf"/>
    <property type="match status" value="1"/>
</dbReference>
<dbReference type="PANTHER" id="PTHR43213:SF10">
    <property type="entry name" value="7-METHYL-GTP PYROPHOSPHATASE"/>
    <property type="match status" value="1"/>
</dbReference>
<dbReference type="PANTHER" id="PTHR43213">
    <property type="entry name" value="BIFUNCTIONAL DTTP/UTP PYROPHOSPHATASE/METHYLTRANSFERASE PROTEIN-RELATED"/>
    <property type="match status" value="1"/>
</dbReference>
<dbReference type="Pfam" id="PF02545">
    <property type="entry name" value="Maf"/>
    <property type="match status" value="1"/>
</dbReference>
<dbReference type="PIRSF" id="PIRSF006305">
    <property type="entry name" value="Maf"/>
    <property type="match status" value="1"/>
</dbReference>
<dbReference type="SUPFAM" id="SSF52972">
    <property type="entry name" value="ITPase-like"/>
    <property type="match status" value="1"/>
</dbReference>
<proteinExistence type="inferred from homology"/>
<evidence type="ECO:0000255" key="1">
    <source>
        <dbReference type="HAMAP-Rule" id="MF_00528"/>
    </source>
</evidence>
<evidence type="ECO:0000305" key="2"/>
<reference key="1">
    <citation type="submission" date="2006-08" db="EMBL/GenBank/DDBJ databases">
        <title>Complete sequence of Shewanella sp. MR-4.</title>
        <authorList>
            <consortium name="US DOE Joint Genome Institute"/>
            <person name="Copeland A."/>
            <person name="Lucas S."/>
            <person name="Lapidus A."/>
            <person name="Barry K."/>
            <person name="Detter J.C."/>
            <person name="Glavina del Rio T."/>
            <person name="Hammon N."/>
            <person name="Israni S."/>
            <person name="Dalin E."/>
            <person name="Tice H."/>
            <person name="Pitluck S."/>
            <person name="Kiss H."/>
            <person name="Brettin T."/>
            <person name="Bruce D."/>
            <person name="Han C."/>
            <person name="Tapia R."/>
            <person name="Gilna P."/>
            <person name="Schmutz J."/>
            <person name="Larimer F."/>
            <person name="Land M."/>
            <person name="Hauser L."/>
            <person name="Kyrpides N."/>
            <person name="Mikhailova N."/>
            <person name="Nealson K."/>
            <person name="Konstantinidis K."/>
            <person name="Klappenbach J."/>
            <person name="Tiedje J."/>
            <person name="Richardson P."/>
        </authorList>
    </citation>
    <scope>NUCLEOTIDE SEQUENCE [LARGE SCALE GENOMIC DNA]</scope>
    <source>
        <strain>MR-4</strain>
    </source>
</reference>
<protein>
    <recommendedName>
        <fullName evidence="1">7-methyl-GTP pyrophosphatase</fullName>
        <shortName evidence="1">m(7)GTP pyrophosphatase</shortName>
        <ecNumber evidence="1">3.6.1.-</ecNumber>
    </recommendedName>
</protein>
<comment type="function">
    <text evidence="1">Nucleoside triphosphate pyrophosphatase that hydrolyzes 7-methyl-GTP (m(7)GTP). May have a dual role in cell division arrest and in preventing the incorporation of modified nucleotides into cellular nucleic acids.</text>
</comment>
<comment type="catalytic activity">
    <reaction evidence="1">
        <text>N(7)-methyl-GTP + H2O = N(7)-methyl-GMP + diphosphate + H(+)</text>
        <dbReference type="Rhea" id="RHEA:58744"/>
        <dbReference type="ChEBI" id="CHEBI:15377"/>
        <dbReference type="ChEBI" id="CHEBI:15378"/>
        <dbReference type="ChEBI" id="CHEBI:33019"/>
        <dbReference type="ChEBI" id="CHEBI:58285"/>
        <dbReference type="ChEBI" id="CHEBI:87133"/>
    </reaction>
</comment>
<comment type="cofactor">
    <cofactor evidence="1">
        <name>a divalent metal cation</name>
        <dbReference type="ChEBI" id="CHEBI:60240"/>
    </cofactor>
</comment>
<comment type="subcellular location">
    <subcellularLocation>
        <location evidence="1">Cytoplasm</location>
    </subcellularLocation>
</comment>
<comment type="similarity">
    <text evidence="1">Belongs to the Maf family. YceF subfamily.</text>
</comment>
<comment type="sequence caution" evidence="2">
    <conflict type="erroneous initiation">
        <sequence resource="EMBL-CDS" id="ABI39473"/>
    </conflict>
</comment>
<sequence length="195" mass="20979">MTPQLILASTSVFRQALLQKLGLAFGSCNPDIDESPMTNESAQDLVLRLAKAKAKAGATHFPHGLIIGSDQVAVIDGKIIGKPLNRENAIKQLSQASGKVITFYTGLALYDAKTGEVTAQVEPFTVHFRQLTAAQIVAYVDKEQPFYCAGSFKSEGLGIALFTRLEGRDPNTLIGLPLILLTEMLLNHGIDVLAD</sequence>